<proteinExistence type="inferred from homology"/>
<accession>C5BF39</accession>
<name>ATPG_EDWI9</name>
<reference key="1">
    <citation type="submission" date="2009-03" db="EMBL/GenBank/DDBJ databases">
        <title>Complete genome sequence of Edwardsiella ictaluri 93-146.</title>
        <authorList>
            <person name="Williams M.L."/>
            <person name="Gillaspy A.F."/>
            <person name="Dyer D.W."/>
            <person name="Thune R.L."/>
            <person name="Waldbieser G.C."/>
            <person name="Schuster S.C."/>
            <person name="Gipson J."/>
            <person name="Zaitshik J."/>
            <person name="Landry C."/>
            <person name="Lawrence M.L."/>
        </authorList>
    </citation>
    <scope>NUCLEOTIDE SEQUENCE [LARGE SCALE GENOMIC DNA]</scope>
    <source>
        <strain>93-146</strain>
    </source>
</reference>
<sequence length="287" mass="31756">MAGAKEIRSKIASVQNTQKITKAMEMVAASKMRKTQDRMAASRPYAETMRKVIGHLALGNLEYKHPYLEERDIKRVGYLVVSTDRGLCGGLNINLFKKLLTEMKEWNQKGVDIDLALIGSKAVSFFGSVGGNVVAQVTGMGDNPSLSELIGPVKVMLQAYDEGRLDRLYVVSNKFINTMSQEPQVIQLLPLPKADDAELKRKSWDYLYEPDPKALLDTLLRRYVESQVYQGVVENLASEQAARMVAMKAATDNGGNLIKELQLVYNKARQASITQELTEIVSGAAAV</sequence>
<evidence type="ECO:0000255" key="1">
    <source>
        <dbReference type="HAMAP-Rule" id="MF_00815"/>
    </source>
</evidence>
<gene>
    <name evidence="1" type="primary">atpG</name>
    <name type="ordered locus">NT01EI_3911</name>
</gene>
<dbReference type="EMBL" id="CP001600">
    <property type="protein sequence ID" value="ACR71022.1"/>
    <property type="molecule type" value="Genomic_DNA"/>
</dbReference>
<dbReference type="RefSeq" id="WP_015873050.1">
    <property type="nucleotide sequence ID" value="NZ_CP169062.1"/>
</dbReference>
<dbReference type="SMR" id="C5BF39"/>
<dbReference type="STRING" id="67780.B6E78_11080"/>
<dbReference type="GeneID" id="69540727"/>
<dbReference type="KEGG" id="eic:NT01EI_3911"/>
<dbReference type="PATRIC" id="fig|634503.3.peg.3482"/>
<dbReference type="HOGENOM" id="CLU_050669_0_1_6"/>
<dbReference type="OrthoDB" id="9812769at2"/>
<dbReference type="Proteomes" id="UP000001485">
    <property type="component" value="Chromosome"/>
</dbReference>
<dbReference type="GO" id="GO:0005886">
    <property type="term" value="C:plasma membrane"/>
    <property type="evidence" value="ECO:0007669"/>
    <property type="project" value="UniProtKB-SubCell"/>
</dbReference>
<dbReference type="GO" id="GO:0045259">
    <property type="term" value="C:proton-transporting ATP synthase complex"/>
    <property type="evidence" value="ECO:0007669"/>
    <property type="project" value="UniProtKB-KW"/>
</dbReference>
<dbReference type="GO" id="GO:0005524">
    <property type="term" value="F:ATP binding"/>
    <property type="evidence" value="ECO:0007669"/>
    <property type="project" value="UniProtKB-UniRule"/>
</dbReference>
<dbReference type="GO" id="GO:0046933">
    <property type="term" value="F:proton-transporting ATP synthase activity, rotational mechanism"/>
    <property type="evidence" value="ECO:0007669"/>
    <property type="project" value="UniProtKB-UniRule"/>
</dbReference>
<dbReference type="GO" id="GO:0042777">
    <property type="term" value="P:proton motive force-driven plasma membrane ATP synthesis"/>
    <property type="evidence" value="ECO:0007669"/>
    <property type="project" value="UniProtKB-UniRule"/>
</dbReference>
<dbReference type="CDD" id="cd12151">
    <property type="entry name" value="F1-ATPase_gamma"/>
    <property type="match status" value="1"/>
</dbReference>
<dbReference type="FunFam" id="1.10.287.80:FF:000005">
    <property type="entry name" value="ATP synthase gamma chain"/>
    <property type="match status" value="2"/>
</dbReference>
<dbReference type="FunFam" id="3.40.1380.10:FF:000001">
    <property type="entry name" value="ATP synthase gamma chain"/>
    <property type="match status" value="1"/>
</dbReference>
<dbReference type="Gene3D" id="3.40.1380.10">
    <property type="match status" value="1"/>
</dbReference>
<dbReference type="Gene3D" id="1.10.287.80">
    <property type="entry name" value="ATP synthase, gamma subunit, helix hairpin domain"/>
    <property type="match status" value="1"/>
</dbReference>
<dbReference type="HAMAP" id="MF_00815">
    <property type="entry name" value="ATP_synth_gamma_bact"/>
    <property type="match status" value="1"/>
</dbReference>
<dbReference type="InterPro" id="IPR035968">
    <property type="entry name" value="ATP_synth_F1_ATPase_gsu"/>
</dbReference>
<dbReference type="InterPro" id="IPR000131">
    <property type="entry name" value="ATP_synth_F1_gsu"/>
</dbReference>
<dbReference type="InterPro" id="IPR023632">
    <property type="entry name" value="ATP_synth_F1_gsu_CS"/>
</dbReference>
<dbReference type="NCBIfam" id="TIGR01146">
    <property type="entry name" value="ATPsyn_F1gamma"/>
    <property type="match status" value="1"/>
</dbReference>
<dbReference type="NCBIfam" id="NF004144">
    <property type="entry name" value="PRK05621.1-1"/>
    <property type="match status" value="1"/>
</dbReference>
<dbReference type="PANTHER" id="PTHR11693">
    <property type="entry name" value="ATP SYNTHASE GAMMA CHAIN"/>
    <property type="match status" value="1"/>
</dbReference>
<dbReference type="PANTHER" id="PTHR11693:SF22">
    <property type="entry name" value="ATP SYNTHASE SUBUNIT GAMMA, MITOCHONDRIAL"/>
    <property type="match status" value="1"/>
</dbReference>
<dbReference type="Pfam" id="PF00231">
    <property type="entry name" value="ATP-synt"/>
    <property type="match status" value="1"/>
</dbReference>
<dbReference type="PRINTS" id="PR00126">
    <property type="entry name" value="ATPASEGAMMA"/>
</dbReference>
<dbReference type="SUPFAM" id="SSF52943">
    <property type="entry name" value="ATP synthase (F1-ATPase), gamma subunit"/>
    <property type="match status" value="1"/>
</dbReference>
<dbReference type="PROSITE" id="PS00153">
    <property type="entry name" value="ATPASE_GAMMA"/>
    <property type="match status" value="1"/>
</dbReference>
<organism>
    <name type="scientific">Edwardsiella ictaluri (strain 93-146)</name>
    <dbReference type="NCBI Taxonomy" id="634503"/>
    <lineage>
        <taxon>Bacteria</taxon>
        <taxon>Pseudomonadati</taxon>
        <taxon>Pseudomonadota</taxon>
        <taxon>Gammaproteobacteria</taxon>
        <taxon>Enterobacterales</taxon>
        <taxon>Hafniaceae</taxon>
        <taxon>Edwardsiella</taxon>
    </lineage>
</organism>
<keyword id="KW-0066">ATP synthesis</keyword>
<keyword id="KW-0997">Cell inner membrane</keyword>
<keyword id="KW-1003">Cell membrane</keyword>
<keyword id="KW-0139">CF(1)</keyword>
<keyword id="KW-0375">Hydrogen ion transport</keyword>
<keyword id="KW-0406">Ion transport</keyword>
<keyword id="KW-0472">Membrane</keyword>
<keyword id="KW-0813">Transport</keyword>
<feature type="chain" id="PRO_1000213034" description="ATP synthase gamma chain">
    <location>
        <begin position="1"/>
        <end position="287"/>
    </location>
</feature>
<comment type="function">
    <text evidence="1">Produces ATP from ADP in the presence of a proton gradient across the membrane. The gamma chain is believed to be important in regulating ATPase activity and the flow of protons through the CF(0) complex.</text>
</comment>
<comment type="subunit">
    <text evidence="1">F-type ATPases have 2 components, CF(1) - the catalytic core - and CF(0) - the membrane proton channel. CF(1) has five subunits: alpha(3), beta(3), gamma(1), delta(1), epsilon(1). CF(0) has three main subunits: a, b and c.</text>
</comment>
<comment type="subcellular location">
    <subcellularLocation>
        <location evidence="1">Cell inner membrane</location>
        <topology evidence="1">Peripheral membrane protein</topology>
    </subcellularLocation>
</comment>
<comment type="similarity">
    <text evidence="1">Belongs to the ATPase gamma chain family.</text>
</comment>
<protein>
    <recommendedName>
        <fullName evidence="1">ATP synthase gamma chain</fullName>
    </recommendedName>
    <alternativeName>
        <fullName evidence="1">ATP synthase F1 sector gamma subunit</fullName>
    </alternativeName>
    <alternativeName>
        <fullName evidence="1">F-ATPase gamma subunit</fullName>
    </alternativeName>
</protein>